<protein>
    <recommendedName>
        <fullName evidence="1">UPF0212 protein MMP1509</fullName>
    </recommendedName>
</protein>
<dbReference type="EMBL" id="BX950229">
    <property type="protein sequence ID" value="CAF31065.1"/>
    <property type="molecule type" value="Genomic_DNA"/>
</dbReference>
<dbReference type="RefSeq" id="WP_011171453.1">
    <property type="nucleotide sequence ID" value="NC_005791.1"/>
</dbReference>
<dbReference type="STRING" id="267377.MMP1509"/>
<dbReference type="EnsemblBacteria" id="CAF31065">
    <property type="protein sequence ID" value="CAF31065"/>
    <property type="gene ID" value="MMP1509"/>
</dbReference>
<dbReference type="KEGG" id="mmp:MMP1509"/>
<dbReference type="PATRIC" id="fig|267377.15.peg.1546"/>
<dbReference type="eggNOG" id="arCOG02119">
    <property type="taxonomic scope" value="Archaea"/>
</dbReference>
<dbReference type="HOGENOM" id="CLU_138334_0_0_2"/>
<dbReference type="OrthoDB" id="63517at2157"/>
<dbReference type="Proteomes" id="UP000000590">
    <property type="component" value="Chromosome"/>
</dbReference>
<dbReference type="HAMAP" id="MF_01223">
    <property type="entry name" value="UPF0212"/>
    <property type="match status" value="1"/>
</dbReference>
<dbReference type="InterPro" id="IPR007564">
    <property type="entry name" value="UPF0212"/>
</dbReference>
<dbReference type="NCBIfam" id="NF003035">
    <property type="entry name" value="PRK03922.1"/>
    <property type="match status" value="1"/>
</dbReference>
<dbReference type="PANTHER" id="PTHR42199">
    <property type="entry name" value="UPF0212 PROTEIN MJ0068"/>
    <property type="match status" value="1"/>
</dbReference>
<dbReference type="PANTHER" id="PTHR42199:SF1">
    <property type="entry name" value="UPF0212 PROTEIN TK1194"/>
    <property type="match status" value="1"/>
</dbReference>
<dbReference type="Pfam" id="PF04475">
    <property type="entry name" value="DUF555"/>
    <property type="match status" value="1"/>
</dbReference>
<dbReference type="PIRSF" id="PIRSF016934">
    <property type="entry name" value="UCP016934"/>
    <property type="match status" value="1"/>
</dbReference>
<organism>
    <name type="scientific">Methanococcus maripaludis (strain DSM 14266 / JCM 13030 / NBRC 101832 / S2 / LL)</name>
    <dbReference type="NCBI Taxonomy" id="267377"/>
    <lineage>
        <taxon>Archaea</taxon>
        <taxon>Methanobacteriati</taxon>
        <taxon>Methanobacteriota</taxon>
        <taxon>Methanomada group</taxon>
        <taxon>Methanococci</taxon>
        <taxon>Methanococcales</taxon>
        <taxon>Methanococcaceae</taxon>
        <taxon>Methanococcus</taxon>
    </lineage>
</organism>
<feature type="chain" id="PRO_0000408229" description="UPF0212 protein MMP1509">
    <location>
        <begin position="1"/>
        <end position="113"/>
    </location>
</feature>
<gene>
    <name type="ordered locus">MMP1509</name>
</gene>
<keyword id="KW-1185">Reference proteome</keyword>
<comment type="similarity">
    <text evidence="1">Belongs to the UPF0212 family.</text>
</comment>
<evidence type="ECO:0000255" key="1">
    <source>
        <dbReference type="HAMAP-Rule" id="MF_01223"/>
    </source>
</evidence>
<reference key="1">
    <citation type="journal article" date="2004" name="J. Bacteriol.">
        <title>Complete genome sequence of the genetically tractable hydrogenotrophic methanogen Methanococcus maripaludis.</title>
        <authorList>
            <person name="Hendrickson E.L."/>
            <person name="Kaul R."/>
            <person name="Zhou Y."/>
            <person name="Bovee D."/>
            <person name="Chapman P."/>
            <person name="Chung J."/>
            <person name="Conway de Macario E."/>
            <person name="Dodsworth J.A."/>
            <person name="Gillett W."/>
            <person name="Graham D.E."/>
            <person name="Hackett M."/>
            <person name="Haydock A.K."/>
            <person name="Kang A."/>
            <person name="Land M.L."/>
            <person name="Levy R."/>
            <person name="Lie T.J."/>
            <person name="Major T.A."/>
            <person name="Moore B.C."/>
            <person name="Porat I."/>
            <person name="Palmeiri A."/>
            <person name="Rouse G."/>
            <person name="Saenphimmachak C."/>
            <person name="Soell D."/>
            <person name="Van Dien S."/>
            <person name="Wang T."/>
            <person name="Whitman W.B."/>
            <person name="Xia Q."/>
            <person name="Zhang Y."/>
            <person name="Larimer F.W."/>
            <person name="Olson M.V."/>
            <person name="Leigh J.A."/>
        </authorList>
    </citation>
    <scope>NUCLEOTIDE SEQUENCE [LARGE SCALE GENOMIC DNA]</scope>
    <source>
        <strain>DSM 14266 / JCM 13030 / NBRC 101832 / S2 / LL</strain>
    </source>
</reference>
<proteinExistence type="inferred from homology"/>
<name>Y1509_METMP</name>
<accession>P0CW69</accession>
<accession>Q9P9E9</accession>
<sequence length="113" mass="12049">MGNYHVTLQASYIAKNVEDVEDAIGVAISQIGKLLNKGSLDYVDIDVGLTICPKCGEPIDCVLVVAKTAIVGILLSMKVFNAESPEHAVRIAKSSIGRALKDIPLEDVDVVEI</sequence>